<gene>
    <name evidence="5" type="primary">FAHD2B</name>
</gene>
<comment type="function">
    <text evidence="4">Tautomerase that converts enol-oxaloacetate, a strong inhibitor of succinate dehydrogenase, to the physiological keto form of oxaloacetate (PubMed:38287013). It is thereby required to maximize aerobic respiration efficiency by preventing succinate dehydrogenase inhibition (PubMed:38287013).</text>
</comment>
<comment type="catalytic activity">
    <reaction evidence="4">
        <text>oxaloacetate = enol-oxaloacetate</text>
        <dbReference type="Rhea" id="RHEA:16021"/>
        <dbReference type="ChEBI" id="CHEBI:16452"/>
        <dbReference type="ChEBI" id="CHEBI:17479"/>
        <dbReference type="EC" id="5.3.2.2"/>
    </reaction>
    <physiologicalReaction direction="right-to-left" evidence="4">
        <dbReference type="Rhea" id="RHEA:16023"/>
    </physiologicalReaction>
</comment>
<comment type="cofactor">
    <cofactor evidence="2">
        <name>Mg(2+)</name>
        <dbReference type="ChEBI" id="CHEBI:18420"/>
    </cofactor>
    <cofactor evidence="2">
        <name>Mn(2+)</name>
        <dbReference type="ChEBI" id="CHEBI:29035"/>
    </cofactor>
    <text evidence="2">Requires a divalent metal cation for activity.</text>
</comment>
<comment type="subcellular location">
    <subcellularLocation>
        <location evidence="7">Mitochondrion</location>
    </subcellularLocation>
</comment>
<comment type="similarity">
    <text evidence="6">Belongs to the FAH family.</text>
</comment>
<proteinExistence type="evidence at protein level"/>
<reference key="1">
    <citation type="submission" date="2002-12" db="EMBL/GenBank/DDBJ databases">
        <title>Nucleotide sequence of bovine CGI-105 protein cDNA in adipose tissues of Korean cattle (Hanwoo).</title>
        <authorList>
            <person name="Baik M."/>
            <person name="Bong J."/>
        </authorList>
    </citation>
    <scope>NUCLEOTIDE SEQUENCE [MRNA]</scope>
    <source>
        <strain>Korean</strain>
    </source>
</reference>
<reference key="2">
    <citation type="submission" date="2006-01" db="EMBL/GenBank/DDBJ databases">
        <authorList>
            <consortium name="NIH - Mammalian Gene Collection (MGC) project"/>
        </authorList>
    </citation>
    <scope>NUCLEOTIDE SEQUENCE [LARGE SCALE MRNA]</scope>
    <source>
        <strain>Hereford</strain>
        <tissue>Hypothalamus</tissue>
    </source>
</reference>
<reference key="3">
    <citation type="journal article" date="2024" name="Nat. Commun.">
        <title>A universal metabolite repair enzyme removes a strong inhibitor of the TCA cycle.</title>
        <authorList>
            <person name="Zmuda A.J."/>
            <person name="Kang X."/>
            <person name="Wissbroecker K.B."/>
            <person name="Freund Saxhaug K."/>
            <person name="Costa K.C."/>
            <person name="Hegeman A.D."/>
            <person name="Niehaus T.D."/>
        </authorList>
    </citation>
    <scope>FUNCTION</scope>
    <scope>CATALYTIC ACTIVITY</scope>
    <scope>SUBCELLULAR LOCATION</scope>
</reference>
<protein>
    <recommendedName>
        <fullName evidence="6">Oxaloacetate tautomerase FAHD2B, mitochondrial</fullName>
        <ecNumber evidence="4">5.3.2.2</ecNumber>
    </recommendedName>
    <alternativeName>
        <fullName evidence="6">Fumarylacetoacetate hydrolase domain-containing protein 2B</fullName>
    </alternativeName>
    <alternativeName>
        <fullName evidence="5">Oxaloacetate tautomerase 1-B</fullName>
        <shortName evidence="5">OAT1-B</shortName>
    </alternativeName>
</protein>
<keyword id="KW-0007">Acetylation</keyword>
<keyword id="KW-0413">Isomerase</keyword>
<keyword id="KW-0460">Magnesium</keyword>
<keyword id="KW-0479">Metal-binding</keyword>
<keyword id="KW-0496">Mitochondrion</keyword>
<keyword id="KW-1185">Reference proteome</keyword>
<keyword id="KW-0809">Transit peptide</keyword>
<dbReference type="EC" id="5.3.2.2" evidence="4"/>
<dbReference type="EMBL" id="AY192436">
    <property type="protein sequence ID" value="AAP33277.1"/>
    <property type="molecule type" value="mRNA"/>
</dbReference>
<dbReference type="EMBL" id="BC112705">
    <property type="protein sequence ID" value="AAI12706.1"/>
    <property type="molecule type" value="mRNA"/>
</dbReference>
<dbReference type="RefSeq" id="NP_991359.1">
    <property type="nucleotide sequence ID" value="NM_205790.1"/>
</dbReference>
<dbReference type="SMR" id="Q2KIB0"/>
<dbReference type="FunCoup" id="Q2KIB0">
    <property type="interactions" value="416"/>
</dbReference>
<dbReference type="STRING" id="9913.ENSBTAP00000015354"/>
<dbReference type="PaxDb" id="9913-ENSBTAP00000015354"/>
<dbReference type="PeptideAtlas" id="Q2KIB0"/>
<dbReference type="GeneID" id="404123"/>
<dbReference type="KEGG" id="bta:404123"/>
<dbReference type="CTD" id="51011"/>
<dbReference type="eggNOG" id="KOG1535">
    <property type="taxonomic scope" value="Eukaryota"/>
</dbReference>
<dbReference type="InParanoid" id="Q2KIB0"/>
<dbReference type="OrthoDB" id="411064at2759"/>
<dbReference type="Proteomes" id="UP000009136">
    <property type="component" value="Unplaced"/>
</dbReference>
<dbReference type="GO" id="GO:0005739">
    <property type="term" value="C:mitochondrion"/>
    <property type="evidence" value="ECO:0000304"/>
    <property type="project" value="UniProtKB"/>
</dbReference>
<dbReference type="GO" id="GO:0046872">
    <property type="term" value="F:metal ion binding"/>
    <property type="evidence" value="ECO:0007669"/>
    <property type="project" value="UniProtKB-KW"/>
</dbReference>
<dbReference type="GO" id="GO:0050163">
    <property type="term" value="F:oxaloacetate tautomerase activity"/>
    <property type="evidence" value="ECO:0000314"/>
    <property type="project" value="UniProtKB"/>
</dbReference>
<dbReference type="GO" id="GO:0006107">
    <property type="term" value="P:oxaloacetate metabolic process"/>
    <property type="evidence" value="ECO:0000314"/>
    <property type="project" value="UniProtKB"/>
</dbReference>
<dbReference type="FunFam" id="3.90.850.10:FF:000002">
    <property type="entry name" value="2-hydroxyhepta-2,4-diene-1,7-dioate isomerase"/>
    <property type="match status" value="1"/>
</dbReference>
<dbReference type="Gene3D" id="3.90.850.10">
    <property type="entry name" value="Fumarylacetoacetase-like, C-terminal domain"/>
    <property type="match status" value="1"/>
</dbReference>
<dbReference type="InterPro" id="IPR051121">
    <property type="entry name" value="FAH"/>
</dbReference>
<dbReference type="InterPro" id="IPR011234">
    <property type="entry name" value="Fumarylacetoacetase-like_C"/>
</dbReference>
<dbReference type="InterPro" id="IPR036663">
    <property type="entry name" value="Fumarylacetoacetase_C_sf"/>
</dbReference>
<dbReference type="PANTHER" id="PTHR42796:SF4">
    <property type="entry name" value="FUMARYLACETOACETATE HYDROLASE DOMAIN-CONTAINING PROTEIN 2A"/>
    <property type="match status" value="1"/>
</dbReference>
<dbReference type="PANTHER" id="PTHR42796">
    <property type="entry name" value="FUMARYLACETOACETATE HYDROLASE DOMAIN-CONTAINING PROTEIN 2A-RELATED"/>
    <property type="match status" value="1"/>
</dbReference>
<dbReference type="Pfam" id="PF01557">
    <property type="entry name" value="FAA_hydrolase"/>
    <property type="match status" value="1"/>
</dbReference>
<dbReference type="SUPFAM" id="SSF56529">
    <property type="entry name" value="FAH"/>
    <property type="match status" value="1"/>
</dbReference>
<evidence type="ECO:0000250" key="1">
    <source>
        <dbReference type="UniProtKB" id="Q3TC72"/>
    </source>
</evidence>
<evidence type="ECO:0000250" key="2">
    <source>
        <dbReference type="UniProtKB" id="Q6P587"/>
    </source>
</evidence>
<evidence type="ECO:0000255" key="3"/>
<evidence type="ECO:0000269" key="4">
    <source>
    </source>
</evidence>
<evidence type="ECO:0000303" key="5">
    <source>
    </source>
</evidence>
<evidence type="ECO:0000305" key="6"/>
<evidence type="ECO:0000305" key="7">
    <source>
    </source>
</evidence>
<feature type="transit peptide" description="Mitochondrion" evidence="3">
    <location>
        <begin position="1"/>
        <end position="84"/>
    </location>
</feature>
<feature type="chain" id="PRO_0000289794" description="Oxaloacetate tautomerase FAHD2B, mitochondrial" evidence="3">
    <location>
        <begin position="85"/>
        <end position="314"/>
    </location>
</feature>
<feature type="binding site" evidence="2">
    <location>
        <position position="159"/>
    </location>
    <ligand>
        <name>Mg(2+)</name>
        <dbReference type="ChEBI" id="CHEBI:18420"/>
    </ligand>
</feature>
<feature type="binding site" evidence="2">
    <location>
        <position position="161"/>
    </location>
    <ligand>
        <name>Mg(2+)</name>
        <dbReference type="ChEBI" id="CHEBI:18420"/>
    </ligand>
</feature>
<feature type="binding site" evidence="2">
    <location>
        <position position="190"/>
    </location>
    <ligand>
        <name>Mg(2+)</name>
        <dbReference type="ChEBI" id="CHEBI:18420"/>
    </ligand>
</feature>
<feature type="modified residue" description="N6-acetyllysine; alternate" evidence="1">
    <location>
        <position position="203"/>
    </location>
</feature>
<feature type="modified residue" description="N6-succinyllysine; alternate" evidence="1">
    <location>
        <position position="203"/>
    </location>
</feature>
<feature type="modified residue" description="N6-acetyllysine" evidence="1">
    <location>
        <position position="234"/>
    </location>
</feature>
<feature type="sequence conflict" description="In Ref. 1; AAP33277." evidence="6" ref="1">
    <original>E</original>
    <variation>K</variation>
    <location>
        <position position="155"/>
    </location>
</feature>
<feature type="sequence conflict" description="In Ref. 1; AAP33277." evidence="6" ref="1">
    <original>L</original>
    <variation>V</variation>
    <location>
        <position position="243"/>
    </location>
</feature>
<organism>
    <name type="scientific">Bos taurus</name>
    <name type="common">Bovine</name>
    <dbReference type="NCBI Taxonomy" id="9913"/>
    <lineage>
        <taxon>Eukaryota</taxon>
        <taxon>Metazoa</taxon>
        <taxon>Chordata</taxon>
        <taxon>Craniata</taxon>
        <taxon>Vertebrata</taxon>
        <taxon>Euteleostomi</taxon>
        <taxon>Mammalia</taxon>
        <taxon>Eutheria</taxon>
        <taxon>Laurasiatheria</taxon>
        <taxon>Artiodactyla</taxon>
        <taxon>Ruminantia</taxon>
        <taxon>Pecora</taxon>
        <taxon>Bovidae</taxon>
        <taxon>Bovinae</taxon>
        <taxon>Bos</taxon>
    </lineage>
</organism>
<name>FAH2B_BOVIN</name>
<sequence>MLGSSGRRLLTTVLQAQRWPFQPSRDMRLVQFQAPHLAGPHLGLESGNGGGVIDLNAFEPTLPKTMVEFLEQGEATLSVVRRALATQLPVLPRSEVTFLAPVTRPDKVVCVGMNYADHCREQNVPVPKEPIIFSKFASAIVGPYDNIILPPESQEVDWEVELAVVIGKRGKYIKATDAMAHVAGFTVAHDVSARDWQMGRNGKQWLLGKTFDTFCPLGPALVTKDSVADPHNLKICCRVNGELMQSSNTNQMVFKTEELITWVSQFVTLYPGDIILTGTPPGVGVFRKPPVFLKKGDEVQCEIEELGVIINKVV</sequence>
<accession>Q2KIB0</accession>
<accession>Q6Y1E3</accession>